<dbReference type="EMBL" id="CP000108">
    <property type="protein sequence ID" value="ABB29254.1"/>
    <property type="molecule type" value="Genomic_DNA"/>
</dbReference>
<dbReference type="SMR" id="Q3AP21"/>
<dbReference type="STRING" id="340177.Cag_2006"/>
<dbReference type="KEGG" id="cch:Cag_2006"/>
<dbReference type="eggNOG" id="COG0445">
    <property type="taxonomic scope" value="Bacteria"/>
</dbReference>
<dbReference type="HOGENOM" id="CLU_007831_2_2_10"/>
<dbReference type="OrthoDB" id="9815560at2"/>
<dbReference type="GO" id="GO:0005829">
    <property type="term" value="C:cytosol"/>
    <property type="evidence" value="ECO:0007669"/>
    <property type="project" value="TreeGrafter"/>
</dbReference>
<dbReference type="GO" id="GO:0050660">
    <property type="term" value="F:flavin adenine dinucleotide binding"/>
    <property type="evidence" value="ECO:0007669"/>
    <property type="project" value="UniProtKB-UniRule"/>
</dbReference>
<dbReference type="GO" id="GO:0030488">
    <property type="term" value="P:tRNA methylation"/>
    <property type="evidence" value="ECO:0007669"/>
    <property type="project" value="TreeGrafter"/>
</dbReference>
<dbReference type="GO" id="GO:0002098">
    <property type="term" value="P:tRNA wobble uridine modification"/>
    <property type="evidence" value="ECO:0007669"/>
    <property type="project" value="InterPro"/>
</dbReference>
<dbReference type="FunFam" id="1.10.150.570:FF:000001">
    <property type="entry name" value="tRNA uridine 5-carboxymethylaminomethyl modification enzyme MnmG"/>
    <property type="match status" value="1"/>
</dbReference>
<dbReference type="FunFam" id="3.50.50.60:FF:000002">
    <property type="entry name" value="tRNA uridine 5-carboxymethylaminomethyl modification enzyme MnmG"/>
    <property type="match status" value="1"/>
</dbReference>
<dbReference type="Gene3D" id="3.50.50.60">
    <property type="entry name" value="FAD/NAD(P)-binding domain"/>
    <property type="match status" value="2"/>
</dbReference>
<dbReference type="Gene3D" id="1.10.150.570">
    <property type="entry name" value="GidA associated domain, C-terminal subdomain"/>
    <property type="match status" value="1"/>
</dbReference>
<dbReference type="Gene3D" id="1.10.10.1800">
    <property type="entry name" value="tRNA uridine 5-carboxymethylaminomethyl modification enzyme MnmG/GidA"/>
    <property type="match status" value="1"/>
</dbReference>
<dbReference type="HAMAP" id="MF_00129">
    <property type="entry name" value="MnmG_GidA"/>
    <property type="match status" value="1"/>
</dbReference>
<dbReference type="InterPro" id="IPR036188">
    <property type="entry name" value="FAD/NAD-bd_sf"/>
</dbReference>
<dbReference type="InterPro" id="IPR049312">
    <property type="entry name" value="GIDA_C_N"/>
</dbReference>
<dbReference type="InterPro" id="IPR004416">
    <property type="entry name" value="MnmG"/>
</dbReference>
<dbReference type="InterPro" id="IPR002218">
    <property type="entry name" value="MnmG-rel"/>
</dbReference>
<dbReference type="InterPro" id="IPR020595">
    <property type="entry name" value="MnmG-rel_CS"/>
</dbReference>
<dbReference type="InterPro" id="IPR026904">
    <property type="entry name" value="MnmG_C"/>
</dbReference>
<dbReference type="InterPro" id="IPR047001">
    <property type="entry name" value="MnmG_C_subdom"/>
</dbReference>
<dbReference type="InterPro" id="IPR044920">
    <property type="entry name" value="MnmG_C_subdom_sf"/>
</dbReference>
<dbReference type="InterPro" id="IPR040131">
    <property type="entry name" value="MnmG_N"/>
</dbReference>
<dbReference type="NCBIfam" id="TIGR00136">
    <property type="entry name" value="mnmG_gidA"/>
    <property type="match status" value="1"/>
</dbReference>
<dbReference type="PANTHER" id="PTHR11806">
    <property type="entry name" value="GLUCOSE INHIBITED DIVISION PROTEIN A"/>
    <property type="match status" value="1"/>
</dbReference>
<dbReference type="PANTHER" id="PTHR11806:SF0">
    <property type="entry name" value="PROTEIN MTO1 HOMOLOG, MITOCHONDRIAL"/>
    <property type="match status" value="1"/>
</dbReference>
<dbReference type="Pfam" id="PF01134">
    <property type="entry name" value="GIDA"/>
    <property type="match status" value="1"/>
</dbReference>
<dbReference type="Pfam" id="PF21680">
    <property type="entry name" value="GIDA_C_1st"/>
    <property type="match status" value="1"/>
</dbReference>
<dbReference type="Pfam" id="PF13932">
    <property type="entry name" value="SAM_GIDA_C"/>
    <property type="match status" value="1"/>
</dbReference>
<dbReference type="SMART" id="SM01228">
    <property type="entry name" value="GIDA_assoc_3"/>
    <property type="match status" value="1"/>
</dbReference>
<dbReference type="SUPFAM" id="SSF51905">
    <property type="entry name" value="FAD/NAD(P)-binding domain"/>
    <property type="match status" value="1"/>
</dbReference>
<dbReference type="PROSITE" id="PS01280">
    <property type="entry name" value="GIDA_1"/>
    <property type="match status" value="1"/>
</dbReference>
<dbReference type="PROSITE" id="PS01281">
    <property type="entry name" value="GIDA_2"/>
    <property type="match status" value="1"/>
</dbReference>
<accession>Q3AP21</accession>
<reference key="1">
    <citation type="submission" date="2005-08" db="EMBL/GenBank/DDBJ databases">
        <title>Complete sequence of Chlorobium chlorochromatii CaD3.</title>
        <authorList>
            <consortium name="US DOE Joint Genome Institute"/>
            <person name="Copeland A."/>
            <person name="Lucas S."/>
            <person name="Lapidus A."/>
            <person name="Barry K."/>
            <person name="Detter J.C."/>
            <person name="Glavina T."/>
            <person name="Hammon N."/>
            <person name="Israni S."/>
            <person name="Pitluck S."/>
            <person name="Bryant D."/>
            <person name="Schmutz J."/>
            <person name="Larimer F."/>
            <person name="Land M."/>
            <person name="Kyrpides N."/>
            <person name="Ivanova N."/>
            <person name="Richardson P."/>
        </authorList>
    </citation>
    <scope>NUCLEOTIDE SEQUENCE [LARGE SCALE GENOMIC DNA]</scope>
    <source>
        <strain>CaD3</strain>
    </source>
</reference>
<comment type="function">
    <text evidence="1">NAD-binding protein involved in the addition of a carboxymethylaminomethyl (cmnm) group at the wobble position (U34) of certain tRNAs, forming tRNA-cmnm(5)s(2)U34.</text>
</comment>
<comment type="cofactor">
    <cofactor evidence="1">
        <name>FAD</name>
        <dbReference type="ChEBI" id="CHEBI:57692"/>
    </cofactor>
</comment>
<comment type="subunit">
    <text evidence="1">Homodimer. Heterotetramer of two MnmE and two MnmG subunits.</text>
</comment>
<comment type="subcellular location">
    <subcellularLocation>
        <location evidence="1">Cytoplasm</location>
    </subcellularLocation>
</comment>
<comment type="similarity">
    <text evidence="1">Belongs to the MnmG family.</text>
</comment>
<sequence length="621" mass="68804">MYDVIVVGAGHAGCEAILAAARMGATCLLITSDLTAIARMSCNPAIGGMAKGQITREIDALGGEMAKAIDATGIQFRLLNRSKGPAMHSPRAQADRTLYSLYMRTIIEREPNIDLLQDTVIAIETKGECFAGVRITSSRVIEGKSAILTCGTFLNGLIHVGMNHFAGGRTIAEPPVVGLTENLCAHGFQAGRLKTGTPPRIDSRSIDYRKVDEQPGDIEPILFSFESKGALQSKQVSCFITKTTEETHAILRKGFERSPLFTGKVQGIGPRYCPSVEDKIFRFPDKNSHHIFLEPEGIDTNEMYVNGFSTSLPEDIQLEGLHSIPGLEQVKMIRPGYAIEYDYFYPHQIQATLETRLIENLYFAGQINGTSGYEEAAAQGLMAGINAVLKMRKHEPLILTRSDAYIGVLIDDLITKETNEPYRMFTSSAEHRLLLRHDNADIRLHEFGYRVGLLPEHRYQATRQKIEQINAVKTLLSQIRLESGLANKLLQELEYGEVTGAQQVTTLLKRPRVTLAKLLATSPELHSQLSNISNNPLVYEQVEIDCKYEGYLKRDALVAEKIQRLEAHHIPALLDYHAIAGLSNEGREKLKKHRPENIGQASRILGVSPSDISILMVHLGR</sequence>
<organism>
    <name type="scientific">Chlorobium chlorochromatii (strain CaD3)</name>
    <dbReference type="NCBI Taxonomy" id="340177"/>
    <lineage>
        <taxon>Bacteria</taxon>
        <taxon>Pseudomonadati</taxon>
        <taxon>Chlorobiota</taxon>
        <taxon>Chlorobiia</taxon>
        <taxon>Chlorobiales</taxon>
        <taxon>Chlorobiaceae</taxon>
        <taxon>Chlorobium/Pelodictyon group</taxon>
        <taxon>Chlorobium</taxon>
    </lineage>
</organism>
<proteinExistence type="inferred from homology"/>
<keyword id="KW-0963">Cytoplasm</keyword>
<keyword id="KW-0274">FAD</keyword>
<keyword id="KW-0285">Flavoprotein</keyword>
<keyword id="KW-0520">NAD</keyword>
<keyword id="KW-0819">tRNA processing</keyword>
<name>MNMG_CHLCH</name>
<evidence type="ECO:0000255" key="1">
    <source>
        <dbReference type="HAMAP-Rule" id="MF_00129"/>
    </source>
</evidence>
<protein>
    <recommendedName>
        <fullName evidence="1">tRNA uridine 5-carboxymethylaminomethyl modification enzyme MnmG</fullName>
    </recommendedName>
    <alternativeName>
        <fullName evidence="1">Glucose-inhibited division protein A</fullName>
    </alternativeName>
</protein>
<gene>
    <name evidence="1" type="primary">mnmG</name>
    <name evidence="1" type="synonym">gidA</name>
    <name type="ordered locus">Cag_2006</name>
</gene>
<feature type="chain" id="PRO_1000016576" description="tRNA uridine 5-carboxymethylaminomethyl modification enzyme MnmG">
    <location>
        <begin position="1"/>
        <end position="621"/>
    </location>
</feature>
<feature type="binding site" evidence="1">
    <location>
        <begin position="8"/>
        <end position="13"/>
    </location>
    <ligand>
        <name>FAD</name>
        <dbReference type="ChEBI" id="CHEBI:57692"/>
    </ligand>
</feature>
<feature type="binding site" evidence="1">
    <location>
        <begin position="269"/>
        <end position="283"/>
    </location>
    <ligand>
        <name>NAD(+)</name>
        <dbReference type="ChEBI" id="CHEBI:57540"/>
    </ligand>
</feature>